<keyword id="KW-0028">Amino-acid biosynthesis</keyword>
<keyword id="KW-0378">Hydrolase</keyword>
<keyword id="KW-0486">Methionine biosynthesis</keyword>
<keyword id="KW-1185">Reference proteome</keyword>
<protein>
    <recommendedName>
        <fullName evidence="1">5'-methylthioadenosine/S-adenosylhomocysteine nucleosidase</fullName>
        <shortName evidence="1">MTA/SAH nucleosidase</shortName>
        <shortName evidence="1">MTAN</shortName>
        <ecNumber evidence="1">3.2.2.9</ecNumber>
    </recommendedName>
    <alternativeName>
        <fullName evidence="1">5'-deoxyadenosine nucleosidase</fullName>
        <shortName evidence="1">DOA nucleosidase</shortName>
        <shortName evidence="1">dAdo nucleosidase</shortName>
    </alternativeName>
    <alternativeName>
        <fullName evidence="1">5'-methylthioadenosine nucleosidase</fullName>
        <shortName evidence="1">MTA nucleosidase</shortName>
    </alternativeName>
    <alternativeName>
        <fullName evidence="1">S-adenosylhomocysteine nucleosidase</fullName>
        <shortName evidence="1">AdoHcy nucleosidase</shortName>
        <shortName evidence="1">SAH nucleosidase</shortName>
        <shortName evidence="1">SRH nucleosidase</shortName>
    </alternativeName>
</protein>
<organism>
    <name type="scientific">Tolumonas auensis (strain DSM 9187 / NBRC 110442 / TA 4)</name>
    <dbReference type="NCBI Taxonomy" id="595494"/>
    <lineage>
        <taxon>Bacteria</taxon>
        <taxon>Pseudomonadati</taxon>
        <taxon>Pseudomonadota</taxon>
        <taxon>Gammaproteobacteria</taxon>
        <taxon>Aeromonadales</taxon>
        <taxon>Aeromonadaceae</taxon>
        <taxon>Tolumonas</taxon>
    </lineage>
</organism>
<gene>
    <name evidence="1" type="primary">mtnN</name>
    <name type="ordered locus">Tola_0615</name>
</gene>
<sequence length="230" mass="24895">MKIGIIGAMEPEVAILREQISNMETLSIAGCEFYRGELAGHDVILTRSGIGKVAASIATTILLDRYAPDCVINTGSAGGFDPELRVGDVVISDEVRHHDVNVTAFGYEPGQLPQQPAAFISDSKLIEVATQVMHQLPELQSRIGLICTGDQFMCDPDHIEQVRQTFPAMMAAEMEAAAIAQVCHQFKVPFVVIRSLSDIAGTESPSTFEEYLEVAAKNSSAMIVAMLKQL</sequence>
<comment type="function">
    <text evidence="1">Catalyzes the irreversible cleavage of the glycosidic bond in both 5'-methylthioadenosine (MTA) and S-adenosylhomocysteine (SAH/AdoHcy) to adenine and the corresponding thioribose, 5'-methylthioribose and S-ribosylhomocysteine, respectively. Also cleaves 5'-deoxyadenosine, a toxic by-product of radical S-adenosylmethionine (SAM) enzymes, into 5-deoxyribose and adenine.</text>
</comment>
<comment type="catalytic activity">
    <reaction evidence="1">
        <text>S-adenosyl-L-homocysteine + H2O = S-(5-deoxy-D-ribos-5-yl)-L-homocysteine + adenine</text>
        <dbReference type="Rhea" id="RHEA:17805"/>
        <dbReference type="ChEBI" id="CHEBI:15377"/>
        <dbReference type="ChEBI" id="CHEBI:16708"/>
        <dbReference type="ChEBI" id="CHEBI:57856"/>
        <dbReference type="ChEBI" id="CHEBI:58195"/>
        <dbReference type="EC" id="3.2.2.9"/>
    </reaction>
</comment>
<comment type="catalytic activity">
    <reaction evidence="1">
        <text>S-methyl-5'-thioadenosine + H2O = 5-(methylsulfanyl)-D-ribose + adenine</text>
        <dbReference type="Rhea" id="RHEA:13617"/>
        <dbReference type="ChEBI" id="CHEBI:15377"/>
        <dbReference type="ChEBI" id="CHEBI:16708"/>
        <dbReference type="ChEBI" id="CHEBI:17509"/>
        <dbReference type="ChEBI" id="CHEBI:78440"/>
        <dbReference type="EC" id="3.2.2.9"/>
    </reaction>
</comment>
<comment type="catalytic activity">
    <reaction evidence="1">
        <text>5'-deoxyadenosine + H2O = 5-deoxy-D-ribose + adenine</text>
        <dbReference type="Rhea" id="RHEA:29859"/>
        <dbReference type="ChEBI" id="CHEBI:15377"/>
        <dbReference type="ChEBI" id="CHEBI:16708"/>
        <dbReference type="ChEBI" id="CHEBI:17319"/>
        <dbReference type="ChEBI" id="CHEBI:149540"/>
        <dbReference type="EC" id="3.2.2.9"/>
    </reaction>
    <physiologicalReaction direction="left-to-right" evidence="1">
        <dbReference type="Rhea" id="RHEA:29860"/>
    </physiologicalReaction>
</comment>
<comment type="pathway">
    <text evidence="1">Amino-acid biosynthesis; L-methionine biosynthesis via salvage pathway; S-methyl-5-thio-alpha-D-ribose 1-phosphate from S-methyl-5'-thioadenosine (hydrolase route): step 1/2.</text>
</comment>
<comment type="similarity">
    <text evidence="1">Belongs to the PNP/UDP phosphorylase family. MtnN subfamily.</text>
</comment>
<reference key="1">
    <citation type="submission" date="2009-05" db="EMBL/GenBank/DDBJ databases">
        <title>Complete sequence of Tolumonas auensis DSM 9187.</title>
        <authorList>
            <consortium name="US DOE Joint Genome Institute"/>
            <person name="Lucas S."/>
            <person name="Copeland A."/>
            <person name="Lapidus A."/>
            <person name="Glavina del Rio T."/>
            <person name="Tice H."/>
            <person name="Bruce D."/>
            <person name="Goodwin L."/>
            <person name="Pitluck S."/>
            <person name="Chertkov O."/>
            <person name="Brettin T."/>
            <person name="Detter J.C."/>
            <person name="Han C."/>
            <person name="Larimer F."/>
            <person name="Land M."/>
            <person name="Hauser L."/>
            <person name="Kyrpides N."/>
            <person name="Mikhailova N."/>
            <person name="Spring S."/>
            <person name="Beller H."/>
        </authorList>
    </citation>
    <scope>NUCLEOTIDE SEQUENCE [LARGE SCALE GENOMIC DNA]</scope>
    <source>
        <strain>DSM 9187 / NBRC 110442 / TA 4</strain>
    </source>
</reference>
<feature type="chain" id="PRO_1000215916" description="5'-methylthioadenosine/S-adenosylhomocysteine nucleosidase">
    <location>
        <begin position="1"/>
        <end position="230"/>
    </location>
</feature>
<feature type="active site" description="Proton acceptor" evidence="1">
    <location>
        <position position="12"/>
    </location>
</feature>
<feature type="active site" description="Proton donor" evidence="1">
    <location>
        <position position="198"/>
    </location>
</feature>
<feature type="binding site" evidence="1">
    <location>
        <position position="78"/>
    </location>
    <ligand>
        <name>substrate</name>
    </ligand>
</feature>
<feature type="binding site" evidence="1">
    <location>
        <position position="153"/>
    </location>
    <ligand>
        <name>substrate</name>
    </ligand>
</feature>
<feature type="binding site" evidence="1">
    <location>
        <begin position="174"/>
        <end position="175"/>
    </location>
    <ligand>
        <name>substrate</name>
    </ligand>
</feature>
<name>MTNN_TOLAT</name>
<evidence type="ECO:0000255" key="1">
    <source>
        <dbReference type="HAMAP-Rule" id="MF_01684"/>
    </source>
</evidence>
<dbReference type="EC" id="3.2.2.9" evidence="1"/>
<dbReference type="EMBL" id="CP001616">
    <property type="protein sequence ID" value="ACQ92244.1"/>
    <property type="molecule type" value="Genomic_DNA"/>
</dbReference>
<dbReference type="RefSeq" id="WP_012728843.1">
    <property type="nucleotide sequence ID" value="NC_012691.1"/>
</dbReference>
<dbReference type="SMR" id="C4LAP0"/>
<dbReference type="STRING" id="595494.Tola_0615"/>
<dbReference type="KEGG" id="tau:Tola_0615"/>
<dbReference type="eggNOG" id="COG0775">
    <property type="taxonomic scope" value="Bacteria"/>
</dbReference>
<dbReference type="HOGENOM" id="CLU_031248_2_2_6"/>
<dbReference type="OrthoDB" id="9792278at2"/>
<dbReference type="UniPathway" id="UPA00904">
    <property type="reaction ID" value="UER00871"/>
</dbReference>
<dbReference type="Proteomes" id="UP000009073">
    <property type="component" value="Chromosome"/>
</dbReference>
<dbReference type="GO" id="GO:0005829">
    <property type="term" value="C:cytosol"/>
    <property type="evidence" value="ECO:0007669"/>
    <property type="project" value="TreeGrafter"/>
</dbReference>
<dbReference type="GO" id="GO:0008782">
    <property type="term" value="F:adenosylhomocysteine nucleosidase activity"/>
    <property type="evidence" value="ECO:0007669"/>
    <property type="project" value="UniProtKB-UniRule"/>
</dbReference>
<dbReference type="GO" id="GO:0008930">
    <property type="term" value="F:methylthioadenosine nucleosidase activity"/>
    <property type="evidence" value="ECO:0007669"/>
    <property type="project" value="UniProtKB-UniRule"/>
</dbReference>
<dbReference type="GO" id="GO:0019509">
    <property type="term" value="P:L-methionine salvage from methylthioadenosine"/>
    <property type="evidence" value="ECO:0007669"/>
    <property type="project" value="UniProtKB-UniRule"/>
</dbReference>
<dbReference type="GO" id="GO:0019284">
    <property type="term" value="P:L-methionine salvage from S-adenosylmethionine"/>
    <property type="evidence" value="ECO:0007669"/>
    <property type="project" value="TreeGrafter"/>
</dbReference>
<dbReference type="GO" id="GO:0009164">
    <property type="term" value="P:nucleoside catabolic process"/>
    <property type="evidence" value="ECO:0007669"/>
    <property type="project" value="InterPro"/>
</dbReference>
<dbReference type="CDD" id="cd09008">
    <property type="entry name" value="MTAN"/>
    <property type="match status" value="1"/>
</dbReference>
<dbReference type="FunFam" id="3.40.50.1580:FF:000001">
    <property type="entry name" value="MTA/SAH nucleosidase family protein"/>
    <property type="match status" value="1"/>
</dbReference>
<dbReference type="Gene3D" id="3.40.50.1580">
    <property type="entry name" value="Nucleoside phosphorylase domain"/>
    <property type="match status" value="1"/>
</dbReference>
<dbReference type="HAMAP" id="MF_01684">
    <property type="entry name" value="Salvage_MtnN"/>
    <property type="match status" value="1"/>
</dbReference>
<dbReference type="InterPro" id="IPR010049">
    <property type="entry name" value="MTA_SAH_Nsdase"/>
</dbReference>
<dbReference type="InterPro" id="IPR000845">
    <property type="entry name" value="Nucleoside_phosphorylase_d"/>
</dbReference>
<dbReference type="InterPro" id="IPR035994">
    <property type="entry name" value="Nucleoside_phosphorylase_sf"/>
</dbReference>
<dbReference type="NCBIfam" id="TIGR01704">
    <property type="entry name" value="MTA_SAH-Nsdase"/>
    <property type="match status" value="1"/>
</dbReference>
<dbReference type="NCBIfam" id="NF004079">
    <property type="entry name" value="PRK05584.1"/>
    <property type="match status" value="1"/>
</dbReference>
<dbReference type="PANTHER" id="PTHR46832">
    <property type="entry name" value="5'-METHYLTHIOADENOSINE/S-ADENOSYLHOMOCYSTEINE NUCLEOSIDASE"/>
    <property type="match status" value="1"/>
</dbReference>
<dbReference type="PANTHER" id="PTHR46832:SF1">
    <property type="entry name" value="5'-METHYLTHIOADENOSINE_S-ADENOSYLHOMOCYSTEINE NUCLEOSIDASE"/>
    <property type="match status" value="1"/>
</dbReference>
<dbReference type="Pfam" id="PF01048">
    <property type="entry name" value="PNP_UDP_1"/>
    <property type="match status" value="1"/>
</dbReference>
<dbReference type="SUPFAM" id="SSF53167">
    <property type="entry name" value="Purine and uridine phosphorylases"/>
    <property type="match status" value="1"/>
</dbReference>
<accession>C4LAP0</accession>
<proteinExistence type="inferred from homology"/>